<dbReference type="EC" id="2.7.2.11" evidence="1"/>
<dbReference type="EMBL" id="CP000440">
    <property type="protein sequence ID" value="ABI86046.1"/>
    <property type="molecule type" value="Genomic_DNA"/>
</dbReference>
<dbReference type="RefSeq" id="WP_006752234.1">
    <property type="nucleotide sequence ID" value="NZ_CP009798.1"/>
</dbReference>
<dbReference type="SMR" id="Q0BIH7"/>
<dbReference type="GeneID" id="93084095"/>
<dbReference type="KEGG" id="bam:Bamb_0487"/>
<dbReference type="PATRIC" id="fig|339670.21.peg.1119"/>
<dbReference type="eggNOG" id="COG0263">
    <property type="taxonomic scope" value="Bacteria"/>
</dbReference>
<dbReference type="UniPathway" id="UPA00098">
    <property type="reaction ID" value="UER00359"/>
</dbReference>
<dbReference type="Proteomes" id="UP000000662">
    <property type="component" value="Chromosome 1"/>
</dbReference>
<dbReference type="GO" id="GO:0005829">
    <property type="term" value="C:cytosol"/>
    <property type="evidence" value="ECO:0007669"/>
    <property type="project" value="TreeGrafter"/>
</dbReference>
<dbReference type="GO" id="GO:0005524">
    <property type="term" value="F:ATP binding"/>
    <property type="evidence" value="ECO:0007669"/>
    <property type="project" value="UniProtKB-KW"/>
</dbReference>
<dbReference type="GO" id="GO:0004349">
    <property type="term" value="F:glutamate 5-kinase activity"/>
    <property type="evidence" value="ECO:0007669"/>
    <property type="project" value="UniProtKB-UniRule"/>
</dbReference>
<dbReference type="GO" id="GO:0003723">
    <property type="term" value="F:RNA binding"/>
    <property type="evidence" value="ECO:0007669"/>
    <property type="project" value="InterPro"/>
</dbReference>
<dbReference type="GO" id="GO:0055129">
    <property type="term" value="P:L-proline biosynthetic process"/>
    <property type="evidence" value="ECO:0007669"/>
    <property type="project" value="UniProtKB-UniRule"/>
</dbReference>
<dbReference type="CDD" id="cd04242">
    <property type="entry name" value="AAK_G5K_ProB"/>
    <property type="match status" value="1"/>
</dbReference>
<dbReference type="CDD" id="cd21157">
    <property type="entry name" value="PUA_G5K"/>
    <property type="match status" value="1"/>
</dbReference>
<dbReference type="FunFam" id="2.30.130.10:FF:000007">
    <property type="entry name" value="Glutamate 5-kinase"/>
    <property type="match status" value="1"/>
</dbReference>
<dbReference type="FunFam" id="3.40.1160.10:FF:000018">
    <property type="entry name" value="Glutamate 5-kinase"/>
    <property type="match status" value="1"/>
</dbReference>
<dbReference type="Gene3D" id="3.40.1160.10">
    <property type="entry name" value="Acetylglutamate kinase-like"/>
    <property type="match status" value="1"/>
</dbReference>
<dbReference type="Gene3D" id="2.30.130.10">
    <property type="entry name" value="PUA domain"/>
    <property type="match status" value="1"/>
</dbReference>
<dbReference type="HAMAP" id="MF_00456">
    <property type="entry name" value="ProB"/>
    <property type="match status" value="1"/>
</dbReference>
<dbReference type="InterPro" id="IPR036393">
    <property type="entry name" value="AceGlu_kinase-like_sf"/>
</dbReference>
<dbReference type="InterPro" id="IPR001048">
    <property type="entry name" value="Asp/Glu/Uridylate_kinase"/>
</dbReference>
<dbReference type="InterPro" id="IPR041739">
    <property type="entry name" value="G5K_ProB"/>
</dbReference>
<dbReference type="InterPro" id="IPR001057">
    <property type="entry name" value="Glu/AcGlu_kinase"/>
</dbReference>
<dbReference type="InterPro" id="IPR011529">
    <property type="entry name" value="Glu_5kinase"/>
</dbReference>
<dbReference type="InterPro" id="IPR005715">
    <property type="entry name" value="Glu_5kinase/COase_Synthase"/>
</dbReference>
<dbReference type="InterPro" id="IPR019797">
    <property type="entry name" value="Glutamate_5-kinase_CS"/>
</dbReference>
<dbReference type="InterPro" id="IPR002478">
    <property type="entry name" value="PUA"/>
</dbReference>
<dbReference type="InterPro" id="IPR015947">
    <property type="entry name" value="PUA-like_sf"/>
</dbReference>
<dbReference type="InterPro" id="IPR036974">
    <property type="entry name" value="PUA_sf"/>
</dbReference>
<dbReference type="NCBIfam" id="TIGR01027">
    <property type="entry name" value="proB"/>
    <property type="match status" value="1"/>
</dbReference>
<dbReference type="PANTHER" id="PTHR43654">
    <property type="entry name" value="GLUTAMATE 5-KINASE"/>
    <property type="match status" value="1"/>
</dbReference>
<dbReference type="PANTHER" id="PTHR43654:SF1">
    <property type="entry name" value="ISOPENTENYL PHOSPHATE KINASE"/>
    <property type="match status" value="1"/>
</dbReference>
<dbReference type="Pfam" id="PF00696">
    <property type="entry name" value="AA_kinase"/>
    <property type="match status" value="1"/>
</dbReference>
<dbReference type="Pfam" id="PF01472">
    <property type="entry name" value="PUA"/>
    <property type="match status" value="1"/>
</dbReference>
<dbReference type="PIRSF" id="PIRSF000729">
    <property type="entry name" value="GK"/>
    <property type="match status" value="1"/>
</dbReference>
<dbReference type="PRINTS" id="PR00474">
    <property type="entry name" value="GLU5KINASE"/>
</dbReference>
<dbReference type="SMART" id="SM00359">
    <property type="entry name" value="PUA"/>
    <property type="match status" value="1"/>
</dbReference>
<dbReference type="SUPFAM" id="SSF53633">
    <property type="entry name" value="Carbamate kinase-like"/>
    <property type="match status" value="1"/>
</dbReference>
<dbReference type="SUPFAM" id="SSF88697">
    <property type="entry name" value="PUA domain-like"/>
    <property type="match status" value="1"/>
</dbReference>
<dbReference type="PROSITE" id="PS00902">
    <property type="entry name" value="GLUTAMATE_5_KINASE"/>
    <property type="match status" value="1"/>
</dbReference>
<dbReference type="PROSITE" id="PS50890">
    <property type="entry name" value="PUA"/>
    <property type="match status" value="1"/>
</dbReference>
<name>PROB_BURCM</name>
<gene>
    <name evidence="1" type="primary">proB</name>
    <name type="ordered locus">Bamb_0487</name>
</gene>
<feature type="chain" id="PRO_1000081042" description="Glutamate 5-kinase">
    <location>
        <begin position="1"/>
        <end position="372"/>
    </location>
</feature>
<feature type="domain" description="PUA" evidence="1">
    <location>
        <begin position="280"/>
        <end position="358"/>
    </location>
</feature>
<feature type="binding site" evidence="1">
    <location>
        <position position="14"/>
    </location>
    <ligand>
        <name>ATP</name>
        <dbReference type="ChEBI" id="CHEBI:30616"/>
    </ligand>
</feature>
<feature type="binding site" evidence="1">
    <location>
        <position position="54"/>
    </location>
    <ligand>
        <name>substrate</name>
    </ligand>
</feature>
<feature type="binding site" evidence="1">
    <location>
        <position position="141"/>
    </location>
    <ligand>
        <name>substrate</name>
    </ligand>
</feature>
<feature type="binding site" evidence="1">
    <location>
        <position position="153"/>
    </location>
    <ligand>
        <name>substrate</name>
    </ligand>
</feature>
<feature type="binding site" evidence="1">
    <location>
        <begin position="173"/>
        <end position="174"/>
    </location>
    <ligand>
        <name>ATP</name>
        <dbReference type="ChEBI" id="CHEBI:30616"/>
    </ligand>
</feature>
<organism>
    <name type="scientific">Burkholderia ambifaria (strain ATCC BAA-244 / DSM 16087 / CCUG 44356 / LMG 19182 / AMMD)</name>
    <name type="common">Burkholderia cepacia (strain AMMD)</name>
    <dbReference type="NCBI Taxonomy" id="339670"/>
    <lineage>
        <taxon>Bacteria</taxon>
        <taxon>Pseudomonadati</taxon>
        <taxon>Pseudomonadota</taxon>
        <taxon>Betaproteobacteria</taxon>
        <taxon>Burkholderiales</taxon>
        <taxon>Burkholderiaceae</taxon>
        <taxon>Burkholderia</taxon>
        <taxon>Burkholderia cepacia complex</taxon>
    </lineage>
</organism>
<accession>Q0BIH7</accession>
<proteinExistence type="inferred from homology"/>
<comment type="function">
    <text evidence="1">Catalyzes the transfer of a phosphate group to glutamate to form L-glutamate 5-phosphate.</text>
</comment>
<comment type="catalytic activity">
    <reaction evidence="1">
        <text>L-glutamate + ATP = L-glutamyl 5-phosphate + ADP</text>
        <dbReference type="Rhea" id="RHEA:14877"/>
        <dbReference type="ChEBI" id="CHEBI:29985"/>
        <dbReference type="ChEBI" id="CHEBI:30616"/>
        <dbReference type="ChEBI" id="CHEBI:58274"/>
        <dbReference type="ChEBI" id="CHEBI:456216"/>
        <dbReference type="EC" id="2.7.2.11"/>
    </reaction>
</comment>
<comment type="pathway">
    <text evidence="1">Amino-acid biosynthesis; L-proline biosynthesis; L-glutamate 5-semialdehyde from L-glutamate: step 1/2.</text>
</comment>
<comment type="subcellular location">
    <subcellularLocation>
        <location evidence="1">Cytoplasm</location>
    </subcellularLocation>
</comment>
<comment type="similarity">
    <text evidence="1">Belongs to the glutamate 5-kinase family.</text>
</comment>
<evidence type="ECO:0000255" key="1">
    <source>
        <dbReference type="HAMAP-Rule" id="MF_00456"/>
    </source>
</evidence>
<sequence length="372" mass="39215">MRSIIADSKRLVVKVGSSLVTNDGKGLDHAAIGRWAAQIAALRAQGKEVVLVSSGAIAEGMQRLGWSKRPREIDELQAAAAVGQMGLAQVYESRFTEHDIRTAQILLTHADLADRERYLNARSTLLTLLRLGVVPIINENDTVVTDEIKFGDNDTLGALVANLIEGDALIILTDQSGLFTADPRKDPNATLVAEASAGAPDLEAMAGGAGSSLGRGGMLTKILAAKRAAHSGANTVIASGRETDVLVRLAAGEAIGTQLIARTARMAARKQWMADHLQVRGHVVIDAGAVEKLTAGGKSLLPIGVIGVQGAFARGEVIACVGPDGREVARGLTNYSSAETKLIHRKPSGEIETVLGYMLEPELIHRDNLVLV</sequence>
<protein>
    <recommendedName>
        <fullName evidence="1">Glutamate 5-kinase</fullName>
        <ecNumber evidence="1">2.7.2.11</ecNumber>
    </recommendedName>
    <alternativeName>
        <fullName evidence="1">Gamma-glutamyl kinase</fullName>
        <shortName evidence="1">GK</shortName>
    </alternativeName>
</protein>
<keyword id="KW-0028">Amino-acid biosynthesis</keyword>
<keyword id="KW-0067">ATP-binding</keyword>
<keyword id="KW-0963">Cytoplasm</keyword>
<keyword id="KW-0418">Kinase</keyword>
<keyword id="KW-0547">Nucleotide-binding</keyword>
<keyword id="KW-0641">Proline biosynthesis</keyword>
<keyword id="KW-0808">Transferase</keyword>
<reference key="1">
    <citation type="submission" date="2006-08" db="EMBL/GenBank/DDBJ databases">
        <title>Complete sequence of chromosome 1 of Burkholderia cepacia AMMD.</title>
        <authorList>
            <person name="Copeland A."/>
            <person name="Lucas S."/>
            <person name="Lapidus A."/>
            <person name="Barry K."/>
            <person name="Detter J.C."/>
            <person name="Glavina del Rio T."/>
            <person name="Hammon N."/>
            <person name="Israni S."/>
            <person name="Pitluck S."/>
            <person name="Bruce D."/>
            <person name="Chain P."/>
            <person name="Malfatti S."/>
            <person name="Shin M."/>
            <person name="Vergez L."/>
            <person name="Schmutz J."/>
            <person name="Larimer F."/>
            <person name="Land M."/>
            <person name="Hauser L."/>
            <person name="Kyrpides N."/>
            <person name="Kim E."/>
            <person name="Parke J."/>
            <person name="Coenye T."/>
            <person name="Konstantinidis K."/>
            <person name="Ramette A."/>
            <person name="Tiedje J."/>
            <person name="Richardson P."/>
        </authorList>
    </citation>
    <scope>NUCLEOTIDE SEQUENCE [LARGE SCALE GENOMIC DNA]</scope>
    <source>
        <strain>ATCC BAA-244 / DSM 16087 / CCUG 44356 / LMG 19182 / AMMD</strain>
    </source>
</reference>